<name>SAA_SHEEP</name>
<accession>P42819</accession>
<protein>
    <recommendedName>
        <fullName>Serum amyloid A protein</fullName>
        <shortName>SAA</shortName>
    </recommendedName>
</protein>
<sequence length="112" mass="12688">QWLSFLGEAYEGAKDMWRAYSDMREANFKGADKYFHARGNYDAAQRGPGGVWAAEVISNGREALQGITDPLFKGMTRDQVREDTKADQFANEWGRSGKDPNHFRPPGLPDKY</sequence>
<organism>
    <name type="scientific">Ovis aries</name>
    <name type="common">Sheep</name>
    <dbReference type="NCBI Taxonomy" id="9940"/>
    <lineage>
        <taxon>Eukaryota</taxon>
        <taxon>Metazoa</taxon>
        <taxon>Chordata</taxon>
        <taxon>Craniata</taxon>
        <taxon>Vertebrata</taxon>
        <taxon>Euteleostomi</taxon>
        <taxon>Mammalia</taxon>
        <taxon>Eutheria</taxon>
        <taxon>Laurasiatheria</taxon>
        <taxon>Artiodactyla</taxon>
        <taxon>Ruminantia</taxon>
        <taxon>Pecora</taxon>
        <taxon>Bovidae</taxon>
        <taxon>Caprinae</taxon>
        <taxon>Ovis</taxon>
    </lineage>
</organism>
<gene>
    <name type="primary">SAA1</name>
</gene>
<reference key="1">
    <citation type="journal article" date="1994" name="Scand. J. Immunol.">
        <title>The primary structure of serum amyloid A protein in the sheep: comparison with serum amyloid A in other species.</title>
        <authorList>
            <person name="Syversen P.V."/>
            <person name="Juul J."/>
            <person name="Marhaug G."/>
            <person name="Husby G."/>
            <person name="Sletten K."/>
        </authorList>
    </citation>
    <scope>PROTEIN SEQUENCE</scope>
    <scope>PYROGLUTAMATE FORMATION AT GLN-1</scope>
    <source>
        <tissue>Plasma</tissue>
    </source>
</reference>
<dbReference type="SMR" id="P42819"/>
<dbReference type="STRING" id="9940.ENSOARP00000010561"/>
<dbReference type="PaxDb" id="9940-ENSOARP00000010561"/>
<dbReference type="eggNOG" id="ENOG502S4PB">
    <property type="taxonomic scope" value="Eukaryota"/>
</dbReference>
<dbReference type="Proteomes" id="UP000002356">
    <property type="component" value="Unplaced"/>
</dbReference>
<dbReference type="GO" id="GO:0034364">
    <property type="term" value="C:high-density lipoprotein particle"/>
    <property type="evidence" value="ECO:0007669"/>
    <property type="project" value="UniProtKB-KW"/>
</dbReference>
<dbReference type="GO" id="GO:0006953">
    <property type="term" value="P:acute-phase response"/>
    <property type="evidence" value="ECO:0007669"/>
    <property type="project" value="UniProtKB-KW"/>
</dbReference>
<dbReference type="FunFam" id="1.10.132.110:FF:000001">
    <property type="entry name" value="Serum amyloid A protein"/>
    <property type="match status" value="1"/>
</dbReference>
<dbReference type="Gene3D" id="1.10.132.110">
    <property type="entry name" value="Serum amyloid A protein"/>
    <property type="match status" value="1"/>
</dbReference>
<dbReference type="InterPro" id="IPR000096">
    <property type="entry name" value="Serum_amyloid_A"/>
</dbReference>
<dbReference type="InterPro" id="IPR052464">
    <property type="entry name" value="Synovial_Prolif_Regulator"/>
</dbReference>
<dbReference type="PANTHER" id="PTHR23424">
    <property type="entry name" value="SERUM AMYLOID A"/>
    <property type="match status" value="1"/>
</dbReference>
<dbReference type="PANTHER" id="PTHR23424:SF31">
    <property type="entry name" value="SERUM AMYLOID A-3 PROTEIN"/>
    <property type="match status" value="1"/>
</dbReference>
<dbReference type="Pfam" id="PF00277">
    <property type="entry name" value="SAA"/>
    <property type="match status" value="1"/>
</dbReference>
<dbReference type="PIRSF" id="PIRSF002472">
    <property type="entry name" value="Serum_amyloid_A"/>
    <property type="match status" value="1"/>
</dbReference>
<dbReference type="PRINTS" id="PR00306">
    <property type="entry name" value="SERUMAMYLOID"/>
</dbReference>
<dbReference type="SMART" id="SM00197">
    <property type="entry name" value="SAA"/>
    <property type="match status" value="1"/>
</dbReference>
<dbReference type="PROSITE" id="PS00992">
    <property type="entry name" value="SAA"/>
    <property type="match status" value="1"/>
</dbReference>
<proteinExistence type="evidence at protein level"/>
<evidence type="ECO:0000256" key="1">
    <source>
        <dbReference type="SAM" id="MobiDB-lite"/>
    </source>
</evidence>
<evidence type="ECO:0000269" key="2">
    <source>
    </source>
</evidence>
<evidence type="ECO:0000305" key="3"/>
<feature type="chain" id="PRO_0000174670" description="Serum amyloid A protein">
    <location>
        <begin position="1"/>
        <end position="112"/>
    </location>
</feature>
<feature type="region of interest" description="Disordered" evidence="1">
    <location>
        <begin position="75"/>
        <end position="112"/>
    </location>
</feature>
<feature type="compositionally biased region" description="Basic and acidic residues" evidence="1">
    <location>
        <begin position="75"/>
        <end position="86"/>
    </location>
</feature>
<feature type="modified residue" description="Pyrrolidone carboxylic acid" evidence="2">
    <location>
        <position position="1"/>
    </location>
</feature>
<comment type="function">
    <text>Major acute phase reactant. Apolipoprotein of the HDL complex.</text>
</comment>
<comment type="subcellular location">
    <subcellularLocation>
        <location>Secreted</location>
    </subcellularLocation>
</comment>
<comment type="tissue specificity">
    <text>Expressed by the liver; secreted in plasma.</text>
</comment>
<comment type="induction">
    <text>Upon cytokine stimulation.</text>
</comment>
<comment type="disease">
    <text>Reactive, secondary amyloidosis is characterized by the extracellular accumulation in various tissues of the SAA protein. These deposits are highly insoluble and resistant to proteolysis; they disrupt tissue structure and compromise function.</text>
</comment>
<comment type="similarity">
    <text evidence="3">Belongs to the SAA family.</text>
</comment>
<keyword id="KW-0011">Acute phase</keyword>
<keyword id="KW-0034">Amyloid</keyword>
<keyword id="KW-0903">Direct protein sequencing</keyword>
<keyword id="KW-0345">HDL</keyword>
<keyword id="KW-0873">Pyrrolidone carboxylic acid</keyword>
<keyword id="KW-1185">Reference proteome</keyword>
<keyword id="KW-0964">Secreted</keyword>